<sequence length="207" mass="23179">MALRLVEELTNEGIIKTERVKKAMLAVPREEFVMPEYRMMAYEDRPLPLFFDATISAPHMVAMMCELVEPRPGMKILEVGTGSGYQAAVCAEAIERKGKVYTIEIVKELAIYAAQNIERLGYWGIVEVYHGDGKKGLERHAPFDAIIVTAAARTIPSELIKQLKDGGVLVIPIEEGVGQVLYKITKRGEKIEKRAITYVLFVPLRDS</sequence>
<accession>A1RSC6</accession>
<keyword id="KW-0963">Cytoplasm</keyword>
<keyword id="KW-0489">Methyltransferase</keyword>
<keyword id="KW-0949">S-adenosyl-L-methionine</keyword>
<keyword id="KW-0808">Transferase</keyword>
<organism>
    <name type="scientific">Pyrobaculum islandicum (strain DSM 4184 / JCM 9189 / GEO3)</name>
    <dbReference type="NCBI Taxonomy" id="384616"/>
    <lineage>
        <taxon>Archaea</taxon>
        <taxon>Thermoproteota</taxon>
        <taxon>Thermoprotei</taxon>
        <taxon>Thermoproteales</taxon>
        <taxon>Thermoproteaceae</taxon>
        <taxon>Pyrobaculum</taxon>
    </lineage>
</organism>
<proteinExistence type="inferred from homology"/>
<evidence type="ECO:0000255" key="1">
    <source>
        <dbReference type="HAMAP-Rule" id="MF_00090"/>
    </source>
</evidence>
<reference key="1">
    <citation type="submission" date="2006-12" db="EMBL/GenBank/DDBJ databases">
        <title>Complete sequence of Pyrobaculum islandicum DSM 4184.</title>
        <authorList>
            <person name="Copeland A."/>
            <person name="Lucas S."/>
            <person name="Lapidus A."/>
            <person name="Barry K."/>
            <person name="Detter J.C."/>
            <person name="Glavina del Rio T."/>
            <person name="Dalin E."/>
            <person name="Tice H."/>
            <person name="Pitluck S."/>
            <person name="Meincke L."/>
            <person name="Brettin T."/>
            <person name="Bruce D."/>
            <person name="Han C."/>
            <person name="Tapia R."/>
            <person name="Gilna P."/>
            <person name="Schmutz J."/>
            <person name="Larimer F."/>
            <person name="Land M."/>
            <person name="Hauser L."/>
            <person name="Kyrpides N."/>
            <person name="Mikhailova N."/>
            <person name="Cozen A.E."/>
            <person name="Fitz-Gibbon S.T."/>
            <person name="House C.H."/>
            <person name="Saltikov C."/>
            <person name="Lowe T."/>
            <person name="Richardson P."/>
        </authorList>
    </citation>
    <scope>NUCLEOTIDE SEQUENCE [LARGE SCALE GENOMIC DNA]</scope>
    <source>
        <strain>DSM 4184 / JCM 9189 / GEO3</strain>
    </source>
</reference>
<name>PIMT_PYRIL</name>
<protein>
    <recommendedName>
        <fullName evidence="1">Protein-L-isoaspartate O-methyltransferase</fullName>
        <ecNumber evidence="1">2.1.1.77</ecNumber>
    </recommendedName>
    <alternativeName>
        <fullName evidence="1">L-isoaspartyl protein carboxyl methyltransferase</fullName>
    </alternativeName>
    <alternativeName>
        <fullName evidence="1">Protein L-isoaspartyl methyltransferase</fullName>
    </alternativeName>
    <alternativeName>
        <fullName evidence="1">Protein-beta-aspartate methyltransferase</fullName>
        <shortName evidence="1">PIMT</shortName>
    </alternativeName>
</protein>
<gene>
    <name evidence="1" type="primary">pcm</name>
    <name type="ordered locus">Pisl_0680</name>
</gene>
<dbReference type="EC" id="2.1.1.77" evidence="1"/>
<dbReference type="EMBL" id="CP000504">
    <property type="protein sequence ID" value="ABL87858.1"/>
    <property type="molecule type" value="Genomic_DNA"/>
</dbReference>
<dbReference type="RefSeq" id="WP_011762434.1">
    <property type="nucleotide sequence ID" value="NC_008701.1"/>
</dbReference>
<dbReference type="SMR" id="A1RSC6"/>
<dbReference type="STRING" id="384616.Pisl_0680"/>
<dbReference type="GeneID" id="4616311"/>
<dbReference type="KEGG" id="pis:Pisl_0680"/>
<dbReference type="eggNOG" id="arCOG00976">
    <property type="taxonomic scope" value="Archaea"/>
</dbReference>
<dbReference type="HOGENOM" id="CLU_055432_2_0_2"/>
<dbReference type="OrthoDB" id="33618at2157"/>
<dbReference type="Proteomes" id="UP000002595">
    <property type="component" value="Chromosome"/>
</dbReference>
<dbReference type="GO" id="GO:0005737">
    <property type="term" value="C:cytoplasm"/>
    <property type="evidence" value="ECO:0007669"/>
    <property type="project" value="UniProtKB-SubCell"/>
</dbReference>
<dbReference type="GO" id="GO:0004719">
    <property type="term" value="F:protein-L-isoaspartate (D-aspartate) O-methyltransferase activity"/>
    <property type="evidence" value="ECO:0007669"/>
    <property type="project" value="UniProtKB-UniRule"/>
</dbReference>
<dbReference type="GO" id="GO:0032259">
    <property type="term" value="P:methylation"/>
    <property type="evidence" value="ECO:0007669"/>
    <property type="project" value="UniProtKB-KW"/>
</dbReference>
<dbReference type="GO" id="GO:0036211">
    <property type="term" value="P:protein modification process"/>
    <property type="evidence" value="ECO:0007669"/>
    <property type="project" value="UniProtKB-UniRule"/>
</dbReference>
<dbReference type="GO" id="GO:0030091">
    <property type="term" value="P:protein repair"/>
    <property type="evidence" value="ECO:0007669"/>
    <property type="project" value="UniProtKB-UniRule"/>
</dbReference>
<dbReference type="CDD" id="cd02440">
    <property type="entry name" value="AdoMet_MTases"/>
    <property type="match status" value="1"/>
</dbReference>
<dbReference type="FunFam" id="3.40.50.150:FF:000010">
    <property type="entry name" value="Protein-L-isoaspartate O-methyltransferase"/>
    <property type="match status" value="1"/>
</dbReference>
<dbReference type="Gene3D" id="3.40.50.150">
    <property type="entry name" value="Vaccinia Virus protein VP39"/>
    <property type="match status" value="1"/>
</dbReference>
<dbReference type="HAMAP" id="MF_00090">
    <property type="entry name" value="PIMT"/>
    <property type="match status" value="1"/>
</dbReference>
<dbReference type="InterPro" id="IPR000682">
    <property type="entry name" value="PCMT"/>
</dbReference>
<dbReference type="InterPro" id="IPR029063">
    <property type="entry name" value="SAM-dependent_MTases_sf"/>
</dbReference>
<dbReference type="NCBIfam" id="TIGR00080">
    <property type="entry name" value="pimt"/>
    <property type="match status" value="1"/>
</dbReference>
<dbReference type="NCBIfam" id="NF001453">
    <property type="entry name" value="PRK00312.1"/>
    <property type="match status" value="1"/>
</dbReference>
<dbReference type="PANTHER" id="PTHR11579">
    <property type="entry name" value="PROTEIN-L-ISOASPARTATE O-METHYLTRANSFERASE"/>
    <property type="match status" value="1"/>
</dbReference>
<dbReference type="PANTHER" id="PTHR11579:SF0">
    <property type="entry name" value="PROTEIN-L-ISOASPARTATE(D-ASPARTATE) O-METHYLTRANSFERASE"/>
    <property type="match status" value="1"/>
</dbReference>
<dbReference type="Pfam" id="PF01135">
    <property type="entry name" value="PCMT"/>
    <property type="match status" value="1"/>
</dbReference>
<dbReference type="SUPFAM" id="SSF53335">
    <property type="entry name" value="S-adenosyl-L-methionine-dependent methyltransferases"/>
    <property type="match status" value="1"/>
</dbReference>
<dbReference type="PROSITE" id="PS01279">
    <property type="entry name" value="PCMT"/>
    <property type="match status" value="1"/>
</dbReference>
<comment type="function">
    <text evidence="1">Catalyzes the methyl esterification of L-isoaspartyl residues in peptides and proteins that result from spontaneous decomposition of normal L-aspartyl and L-asparaginyl residues. It plays a role in the repair and/or degradation of damaged proteins.</text>
</comment>
<comment type="catalytic activity">
    <reaction evidence="1">
        <text>[protein]-L-isoaspartate + S-adenosyl-L-methionine = [protein]-L-isoaspartate alpha-methyl ester + S-adenosyl-L-homocysteine</text>
        <dbReference type="Rhea" id="RHEA:12705"/>
        <dbReference type="Rhea" id="RHEA-COMP:12143"/>
        <dbReference type="Rhea" id="RHEA-COMP:12144"/>
        <dbReference type="ChEBI" id="CHEBI:57856"/>
        <dbReference type="ChEBI" id="CHEBI:59789"/>
        <dbReference type="ChEBI" id="CHEBI:90596"/>
        <dbReference type="ChEBI" id="CHEBI:90598"/>
        <dbReference type="EC" id="2.1.1.77"/>
    </reaction>
</comment>
<comment type="subcellular location">
    <subcellularLocation>
        <location evidence="1">Cytoplasm</location>
    </subcellularLocation>
</comment>
<comment type="similarity">
    <text evidence="1">Belongs to the methyltransferase superfamily. L-isoaspartyl/D-aspartyl protein methyltransferase family.</text>
</comment>
<feature type="chain" id="PRO_1000093269" description="Protein-L-isoaspartate O-methyltransferase">
    <location>
        <begin position="1"/>
        <end position="207"/>
    </location>
</feature>
<feature type="active site" evidence="1">
    <location>
        <position position="56"/>
    </location>
</feature>